<gene>
    <name type="primary">yqzL</name>
    <name type="ordered locus">BSU25289</name>
</gene>
<keyword id="KW-1185">Reference proteome</keyword>
<dbReference type="EMBL" id="AL009126">
    <property type="protein sequence ID" value="CAX52661.1"/>
    <property type="molecule type" value="Genomic_DNA"/>
</dbReference>
<dbReference type="RefSeq" id="WP_003230053.1">
    <property type="nucleotide sequence ID" value="NZ_OZ025638.1"/>
</dbReference>
<dbReference type="RefSeq" id="YP_003097761.1">
    <property type="nucleotide sequence ID" value="NC_000964.3"/>
</dbReference>
<dbReference type="FunCoup" id="C0H452">
    <property type="interactions" value="15"/>
</dbReference>
<dbReference type="STRING" id="224308.BSU25289"/>
<dbReference type="PaxDb" id="224308-BSU25289"/>
<dbReference type="EnsemblBacteria" id="CAX52661">
    <property type="protein sequence ID" value="CAX52661"/>
    <property type="gene ID" value="BSU_25289"/>
</dbReference>
<dbReference type="GeneID" id="8303204"/>
<dbReference type="KEGG" id="bsu:BSU25289"/>
<dbReference type="PATRIC" id="fig|224308.179.peg.2748"/>
<dbReference type="eggNOG" id="ENOG50309RW">
    <property type="taxonomic scope" value="Bacteria"/>
</dbReference>
<dbReference type="InParanoid" id="C0H452"/>
<dbReference type="OrthoDB" id="1650227at2"/>
<dbReference type="BioCyc" id="BSUB:BSU25289-MONOMER"/>
<dbReference type="PRO" id="PR:C0H452"/>
<dbReference type="Proteomes" id="UP000001570">
    <property type="component" value="Chromosome"/>
</dbReference>
<dbReference type="InterPro" id="IPR025617">
    <property type="entry name" value="YqzL"/>
</dbReference>
<dbReference type="Pfam" id="PF14006">
    <property type="entry name" value="YqzL"/>
    <property type="match status" value="1"/>
</dbReference>
<name>YQZL_BACSU</name>
<accession>C0H452</accession>
<organism>
    <name type="scientific">Bacillus subtilis (strain 168)</name>
    <dbReference type="NCBI Taxonomy" id="224308"/>
    <lineage>
        <taxon>Bacteria</taxon>
        <taxon>Bacillati</taxon>
        <taxon>Bacillota</taxon>
        <taxon>Bacilli</taxon>
        <taxon>Bacillales</taxon>
        <taxon>Bacillaceae</taxon>
        <taxon>Bacillus</taxon>
    </lineage>
</organism>
<proteinExistence type="predicted"/>
<sequence length="47" mass="5729">MLNFTWNVFSQTGNVDTYLLFKELEKENMERPEELEDELARFDYPIL</sequence>
<feature type="chain" id="PRO_0000380083" description="Uncharacterized protein YqzL">
    <location>
        <begin position="1"/>
        <end position="47"/>
    </location>
</feature>
<reference key="1">
    <citation type="journal article" date="1997" name="Nature">
        <title>The complete genome sequence of the Gram-positive bacterium Bacillus subtilis.</title>
        <authorList>
            <person name="Kunst F."/>
            <person name="Ogasawara N."/>
            <person name="Moszer I."/>
            <person name="Albertini A.M."/>
            <person name="Alloni G."/>
            <person name="Azevedo V."/>
            <person name="Bertero M.G."/>
            <person name="Bessieres P."/>
            <person name="Bolotin A."/>
            <person name="Borchert S."/>
            <person name="Borriss R."/>
            <person name="Boursier L."/>
            <person name="Brans A."/>
            <person name="Braun M."/>
            <person name="Brignell S.C."/>
            <person name="Bron S."/>
            <person name="Brouillet S."/>
            <person name="Bruschi C.V."/>
            <person name="Caldwell B."/>
            <person name="Capuano V."/>
            <person name="Carter N.M."/>
            <person name="Choi S.-K."/>
            <person name="Codani J.-J."/>
            <person name="Connerton I.F."/>
            <person name="Cummings N.J."/>
            <person name="Daniel R.A."/>
            <person name="Denizot F."/>
            <person name="Devine K.M."/>
            <person name="Duesterhoeft A."/>
            <person name="Ehrlich S.D."/>
            <person name="Emmerson P.T."/>
            <person name="Entian K.-D."/>
            <person name="Errington J."/>
            <person name="Fabret C."/>
            <person name="Ferrari E."/>
            <person name="Foulger D."/>
            <person name="Fritz C."/>
            <person name="Fujita M."/>
            <person name="Fujita Y."/>
            <person name="Fuma S."/>
            <person name="Galizzi A."/>
            <person name="Galleron N."/>
            <person name="Ghim S.-Y."/>
            <person name="Glaser P."/>
            <person name="Goffeau A."/>
            <person name="Golightly E.J."/>
            <person name="Grandi G."/>
            <person name="Guiseppi G."/>
            <person name="Guy B.J."/>
            <person name="Haga K."/>
            <person name="Haiech J."/>
            <person name="Harwood C.R."/>
            <person name="Henaut A."/>
            <person name="Hilbert H."/>
            <person name="Holsappel S."/>
            <person name="Hosono S."/>
            <person name="Hullo M.-F."/>
            <person name="Itaya M."/>
            <person name="Jones L.-M."/>
            <person name="Joris B."/>
            <person name="Karamata D."/>
            <person name="Kasahara Y."/>
            <person name="Klaerr-Blanchard M."/>
            <person name="Klein C."/>
            <person name="Kobayashi Y."/>
            <person name="Koetter P."/>
            <person name="Koningstein G."/>
            <person name="Krogh S."/>
            <person name="Kumano M."/>
            <person name="Kurita K."/>
            <person name="Lapidus A."/>
            <person name="Lardinois S."/>
            <person name="Lauber J."/>
            <person name="Lazarevic V."/>
            <person name="Lee S.-M."/>
            <person name="Levine A."/>
            <person name="Liu H."/>
            <person name="Masuda S."/>
            <person name="Mauel C."/>
            <person name="Medigue C."/>
            <person name="Medina N."/>
            <person name="Mellado R.P."/>
            <person name="Mizuno M."/>
            <person name="Moestl D."/>
            <person name="Nakai S."/>
            <person name="Noback M."/>
            <person name="Noone D."/>
            <person name="O'Reilly M."/>
            <person name="Ogawa K."/>
            <person name="Ogiwara A."/>
            <person name="Oudega B."/>
            <person name="Park S.-H."/>
            <person name="Parro V."/>
            <person name="Pohl T.M."/>
            <person name="Portetelle D."/>
            <person name="Porwollik S."/>
            <person name="Prescott A.M."/>
            <person name="Presecan E."/>
            <person name="Pujic P."/>
            <person name="Purnelle B."/>
            <person name="Rapoport G."/>
            <person name="Rey M."/>
            <person name="Reynolds S."/>
            <person name="Rieger M."/>
            <person name="Rivolta C."/>
            <person name="Rocha E."/>
            <person name="Roche B."/>
            <person name="Rose M."/>
            <person name="Sadaie Y."/>
            <person name="Sato T."/>
            <person name="Scanlan E."/>
            <person name="Schleich S."/>
            <person name="Schroeter R."/>
            <person name="Scoffone F."/>
            <person name="Sekiguchi J."/>
            <person name="Sekowska A."/>
            <person name="Seror S.J."/>
            <person name="Serror P."/>
            <person name="Shin B.-S."/>
            <person name="Soldo B."/>
            <person name="Sorokin A."/>
            <person name="Tacconi E."/>
            <person name="Takagi T."/>
            <person name="Takahashi H."/>
            <person name="Takemaru K."/>
            <person name="Takeuchi M."/>
            <person name="Tamakoshi A."/>
            <person name="Tanaka T."/>
            <person name="Terpstra P."/>
            <person name="Tognoni A."/>
            <person name="Tosato V."/>
            <person name="Uchiyama S."/>
            <person name="Vandenbol M."/>
            <person name="Vannier F."/>
            <person name="Vassarotti A."/>
            <person name="Viari A."/>
            <person name="Wambutt R."/>
            <person name="Wedler E."/>
            <person name="Wedler H."/>
            <person name="Weitzenegger T."/>
            <person name="Winters P."/>
            <person name="Wipat A."/>
            <person name="Yamamoto H."/>
            <person name="Yamane K."/>
            <person name="Yasumoto K."/>
            <person name="Yata K."/>
            <person name="Yoshida K."/>
            <person name="Yoshikawa H.-F."/>
            <person name="Zumstein E."/>
            <person name="Yoshikawa H."/>
            <person name="Danchin A."/>
        </authorList>
    </citation>
    <scope>NUCLEOTIDE SEQUENCE [LARGE SCALE GENOMIC DNA]</scope>
    <source>
        <strain>168</strain>
    </source>
</reference>
<protein>
    <recommendedName>
        <fullName>Uncharacterized protein YqzL</fullName>
    </recommendedName>
</protein>